<sequence>MAEEGPPEPSIDFVPALCFVPRGVAKDRPDKIVLTQAELARIIGDTQQELDEESDDDAEEGENAEEDQNDMDVDDHADANSENRDPQDEFQFQEYDNEANANVTSLANIVDAGEQIPDEDEDSEAEDEVIKPSDNLILVGHVQDDAASMEVWVFNQEEEALYTHHDFLLPSFPLCIEWMNHDAGSEKAGNMCAIGCMDPIITVWDLDIQDAIEPTFKLGSKGSRKQNKEQYGHKDAVLDLSWNTNFEHILASGSVDQTVILWDMDEGQPHTTITAFGKQIQSLEFHPQEAQSILTGCADGYVRLFDCRDAEGVNSSSIEWKVDGEVEKVLWHPTQTDYFIVGTNDGTLHYADKRSPGQLLWSVKAHNEEISGVCFNNQKPNLLTSTSTEGTLKVWNFDGTEAKHVYEHEFNMGRLQCMRQCPEDPYTLAFGGEKPPRCAIFNIKNSIAVRRTFGIPDAE</sequence>
<accession>A1Z8D0</accession>
<accession>B5X0K1</accession>
<accession>Q8SY06</accession>
<organism evidence="11">
    <name type="scientific">Drosophila melanogaster</name>
    <name type="common">Fruit fly</name>
    <dbReference type="NCBI Taxonomy" id="7227"/>
    <lineage>
        <taxon>Eukaryota</taxon>
        <taxon>Metazoa</taxon>
        <taxon>Ecdysozoa</taxon>
        <taxon>Arthropoda</taxon>
        <taxon>Hexapoda</taxon>
        <taxon>Insecta</taxon>
        <taxon>Pterygota</taxon>
        <taxon>Neoptera</taxon>
        <taxon>Endopterygota</taxon>
        <taxon>Diptera</taxon>
        <taxon>Brachycera</taxon>
        <taxon>Muscomorpha</taxon>
        <taxon>Ephydroidea</taxon>
        <taxon>Drosophilidae</taxon>
        <taxon>Drosophila</taxon>
        <taxon>Sophophora</taxon>
    </lineage>
</organism>
<comment type="function">
    <text evidence="3 4">Chromatin-associated factor that regulates transcription (PubMed:21752937). Regulates Pol I-mediated rRNA biogenesis and, probably, Pol III-mediated transcription (PubMed:29065309). Regulates the localization to the nucleolus of Cdk7, a regulator of the Pol I-elongation factor TFIIH (PubMed:29065309). Acts as a regulator of cell proliferation and tissue growth as part of the TORC1 and Myc signaling pathway in response to nutrients (PubMed:29065309). Required in males for both germline stem cell (GSC) maintenance and early stages of germ cell differentiation of germ cell cysts (PubMed:21752937). Not required for female germline stem cell (GSC) maintenance, but necessary to regulate germ cell differentiation and egg chamber development (PubMed:21752937). In female somatic cells, required for follicle stem cell survival and maintenance (PubMed:21752937).</text>
</comment>
<comment type="subunit">
    <text evidence="4">Interacts with Mybbp1A.</text>
</comment>
<comment type="subcellular location">
    <subcellularLocation>
        <location evidence="3">Nucleus</location>
    </subcellularLocation>
    <subcellularLocation>
        <location evidence="4">Nucleus</location>
        <location evidence="4">Nucleolus</location>
    </subcellularLocation>
    <subcellularLocation>
        <location evidence="3">Chromosome</location>
    </subcellularLocation>
    <subcellularLocation>
        <location evidence="4">Nucleus</location>
        <location evidence="4">Nucleoplasm</location>
    </subcellularLocation>
    <text evidence="3 4">Co-localizes with active forms of RNA polymerase II (PubMed:21752937). Associates with open chromatin and chromosomal puffs of polytene chromosomes in larval salivary glands (PubMed:21752937). Nucleolar localization is controlled by mTORC1 signaling (PubMed:29065309).</text>
</comment>
<comment type="tissue specificity">
    <text evidence="3">Detected in the germline of adult testis and ovary (at protein level) (PubMed:21752937). Detected in ovary somatic cells, in zfh1-positive cyst cells in the testis and absent in differentiated cyst cells (at protein level) (PubMed:21752937).</text>
</comment>
<comment type="developmental stage">
    <text evidence="3 4">Detected in embryonic cell types, including germ cells (at protein level) (PubMed:21752937). In early third instar larvae, detected in the fat body (at protein level) (PubMed:29065309). Detected in the larval salivary glands and fat body (at protein level) (PubMed:21752937). Expressed in stage 17 embryos in male but not female gonads (PubMed:21752937).</text>
</comment>
<comment type="induction">
    <text evidence="4">Increased expression upon activation of the Insulin/TOR/Myc pathway in response to protein diet.</text>
</comment>
<comment type="PTM">
    <text evidence="4">Phosphorylated in response to nutrient-activated TORC1 signaling.</text>
</comment>
<comment type="disruption phenotype">
    <text evidence="3 4">Larval mutants exhibit altered cell transcription with reduced levels of Pol I-dependent rRNA biogenesis and, to a certain extent, of III-dependent transcription leading to reduced growth (PubMed:21752937, PubMed:29065309). Displays delayed pupation kinetics and reduced pupal volume (PubMed:29065309). Exhibits reduced number of germline cells leading to fertility defects; female flies have limited fertility, whereas male flies are sterile (PubMed:21752937). In male larvae, germ cells can enter differentiation but spermatogenic cysts cannot develop normally (PubMed:21752937). Adult testes shows fewer hub-proximal germ cells, lack of Stat92e activation and general failure of germline stem cells (GSC) maintenance (PubMed:21752937). RNAi-mediated knockdown in the posterior compartment of the developing wing leads to reduced compartment size (PubMed:29065309). RNAi-mediated knockdown in the fat body results in delayed larval development and reduced pupal volume (PubMed:29065309).</text>
</comment>
<comment type="similarity">
    <text evidence="7">Belongs to the WD repeat PWP1 family.</text>
</comment>
<comment type="sequence caution" evidence="7">
    <conflict type="erroneous initiation">
        <sequence resource="EMBL-CDS" id="ACI16532"/>
    </conflict>
    <text>Extended N-terminus.</text>
</comment>
<reference evidence="11" key="1">
    <citation type="journal article" date="2000" name="Science">
        <title>The genome sequence of Drosophila melanogaster.</title>
        <authorList>
            <person name="Adams M.D."/>
            <person name="Celniker S.E."/>
            <person name="Holt R.A."/>
            <person name="Evans C.A."/>
            <person name="Gocayne J.D."/>
            <person name="Amanatides P.G."/>
            <person name="Scherer S.E."/>
            <person name="Li P.W."/>
            <person name="Hoskins R.A."/>
            <person name="Galle R.F."/>
            <person name="George R.A."/>
            <person name="Lewis S.E."/>
            <person name="Richards S."/>
            <person name="Ashburner M."/>
            <person name="Henderson S.N."/>
            <person name="Sutton G.G."/>
            <person name="Wortman J.R."/>
            <person name="Yandell M.D."/>
            <person name="Zhang Q."/>
            <person name="Chen L.X."/>
            <person name="Brandon R.C."/>
            <person name="Rogers Y.-H.C."/>
            <person name="Blazej R.G."/>
            <person name="Champe M."/>
            <person name="Pfeiffer B.D."/>
            <person name="Wan K.H."/>
            <person name="Doyle C."/>
            <person name="Baxter E.G."/>
            <person name="Helt G."/>
            <person name="Nelson C.R."/>
            <person name="Miklos G.L.G."/>
            <person name="Abril J.F."/>
            <person name="Agbayani A."/>
            <person name="An H.-J."/>
            <person name="Andrews-Pfannkoch C."/>
            <person name="Baldwin D."/>
            <person name="Ballew R.M."/>
            <person name="Basu A."/>
            <person name="Baxendale J."/>
            <person name="Bayraktaroglu L."/>
            <person name="Beasley E.M."/>
            <person name="Beeson K.Y."/>
            <person name="Benos P.V."/>
            <person name="Berman B.P."/>
            <person name="Bhandari D."/>
            <person name="Bolshakov S."/>
            <person name="Borkova D."/>
            <person name="Botchan M.R."/>
            <person name="Bouck J."/>
            <person name="Brokstein P."/>
            <person name="Brottier P."/>
            <person name="Burtis K.C."/>
            <person name="Busam D.A."/>
            <person name="Butler H."/>
            <person name="Cadieu E."/>
            <person name="Center A."/>
            <person name="Chandra I."/>
            <person name="Cherry J.M."/>
            <person name="Cawley S."/>
            <person name="Dahlke C."/>
            <person name="Davenport L.B."/>
            <person name="Davies P."/>
            <person name="de Pablos B."/>
            <person name="Delcher A."/>
            <person name="Deng Z."/>
            <person name="Mays A.D."/>
            <person name="Dew I."/>
            <person name="Dietz S.M."/>
            <person name="Dodson K."/>
            <person name="Doup L.E."/>
            <person name="Downes M."/>
            <person name="Dugan-Rocha S."/>
            <person name="Dunkov B.C."/>
            <person name="Dunn P."/>
            <person name="Durbin K.J."/>
            <person name="Evangelista C.C."/>
            <person name="Ferraz C."/>
            <person name="Ferriera S."/>
            <person name="Fleischmann W."/>
            <person name="Fosler C."/>
            <person name="Gabrielian A.E."/>
            <person name="Garg N.S."/>
            <person name="Gelbart W.M."/>
            <person name="Glasser K."/>
            <person name="Glodek A."/>
            <person name="Gong F."/>
            <person name="Gorrell J.H."/>
            <person name="Gu Z."/>
            <person name="Guan P."/>
            <person name="Harris M."/>
            <person name="Harris N.L."/>
            <person name="Harvey D.A."/>
            <person name="Heiman T.J."/>
            <person name="Hernandez J.R."/>
            <person name="Houck J."/>
            <person name="Hostin D."/>
            <person name="Houston K.A."/>
            <person name="Howland T.J."/>
            <person name="Wei M.-H."/>
            <person name="Ibegwam C."/>
            <person name="Jalali M."/>
            <person name="Kalush F."/>
            <person name="Karpen G.H."/>
            <person name="Ke Z."/>
            <person name="Kennison J.A."/>
            <person name="Ketchum K.A."/>
            <person name="Kimmel B.E."/>
            <person name="Kodira C.D."/>
            <person name="Kraft C.L."/>
            <person name="Kravitz S."/>
            <person name="Kulp D."/>
            <person name="Lai Z."/>
            <person name="Lasko P."/>
            <person name="Lei Y."/>
            <person name="Levitsky A.A."/>
            <person name="Li J.H."/>
            <person name="Li Z."/>
            <person name="Liang Y."/>
            <person name="Lin X."/>
            <person name="Liu X."/>
            <person name="Mattei B."/>
            <person name="McIntosh T.C."/>
            <person name="McLeod M.P."/>
            <person name="McPherson D."/>
            <person name="Merkulov G."/>
            <person name="Milshina N.V."/>
            <person name="Mobarry C."/>
            <person name="Morris J."/>
            <person name="Moshrefi A."/>
            <person name="Mount S.M."/>
            <person name="Moy M."/>
            <person name="Murphy B."/>
            <person name="Murphy L."/>
            <person name="Muzny D.M."/>
            <person name="Nelson D.L."/>
            <person name="Nelson D.R."/>
            <person name="Nelson K.A."/>
            <person name="Nixon K."/>
            <person name="Nusskern D.R."/>
            <person name="Pacleb J.M."/>
            <person name="Palazzolo M."/>
            <person name="Pittman G.S."/>
            <person name="Pan S."/>
            <person name="Pollard J."/>
            <person name="Puri V."/>
            <person name="Reese M.G."/>
            <person name="Reinert K."/>
            <person name="Remington K."/>
            <person name="Saunders R.D.C."/>
            <person name="Scheeler F."/>
            <person name="Shen H."/>
            <person name="Shue B.C."/>
            <person name="Siden-Kiamos I."/>
            <person name="Simpson M."/>
            <person name="Skupski M.P."/>
            <person name="Smith T.J."/>
            <person name="Spier E."/>
            <person name="Spradling A.C."/>
            <person name="Stapleton M."/>
            <person name="Strong R."/>
            <person name="Sun E."/>
            <person name="Svirskas R."/>
            <person name="Tector C."/>
            <person name="Turner R."/>
            <person name="Venter E."/>
            <person name="Wang A.H."/>
            <person name="Wang X."/>
            <person name="Wang Z.-Y."/>
            <person name="Wassarman D.A."/>
            <person name="Weinstock G.M."/>
            <person name="Weissenbach J."/>
            <person name="Williams S.M."/>
            <person name="Woodage T."/>
            <person name="Worley K.C."/>
            <person name="Wu D."/>
            <person name="Yang S."/>
            <person name="Yao Q.A."/>
            <person name="Ye J."/>
            <person name="Yeh R.-F."/>
            <person name="Zaveri J.S."/>
            <person name="Zhan M."/>
            <person name="Zhang G."/>
            <person name="Zhao Q."/>
            <person name="Zheng L."/>
            <person name="Zheng X.H."/>
            <person name="Zhong F.N."/>
            <person name="Zhong W."/>
            <person name="Zhou X."/>
            <person name="Zhu S.C."/>
            <person name="Zhu X."/>
            <person name="Smith H.O."/>
            <person name="Gibbs R.A."/>
            <person name="Myers E.W."/>
            <person name="Rubin G.M."/>
            <person name="Venter J.C."/>
        </authorList>
    </citation>
    <scope>NUCLEOTIDE SEQUENCE [LARGE SCALE GENOMIC DNA]</scope>
    <source>
        <strain evidence="11">Berkeley</strain>
    </source>
</reference>
<reference evidence="11" key="2">
    <citation type="journal article" date="2002" name="Genome Biol.">
        <title>Annotation of the Drosophila melanogaster euchromatic genome: a systematic review.</title>
        <authorList>
            <person name="Misra S."/>
            <person name="Crosby M.A."/>
            <person name="Mungall C.J."/>
            <person name="Matthews B.B."/>
            <person name="Campbell K.S."/>
            <person name="Hradecky P."/>
            <person name="Huang Y."/>
            <person name="Kaminker J.S."/>
            <person name="Millburn G.H."/>
            <person name="Prochnik S.E."/>
            <person name="Smith C.D."/>
            <person name="Tupy J.L."/>
            <person name="Whitfield E.J."/>
            <person name="Bayraktaroglu L."/>
            <person name="Berman B.P."/>
            <person name="Bettencourt B.R."/>
            <person name="Celniker S.E."/>
            <person name="de Grey A.D.N.J."/>
            <person name="Drysdale R.A."/>
            <person name="Harris N.L."/>
            <person name="Richter J."/>
            <person name="Russo S."/>
            <person name="Schroeder A.J."/>
            <person name="Shu S.Q."/>
            <person name="Stapleton M."/>
            <person name="Yamada C."/>
            <person name="Ashburner M."/>
            <person name="Gelbart W.M."/>
            <person name="Rubin G.M."/>
            <person name="Lewis S.E."/>
        </authorList>
    </citation>
    <scope>GENOME REANNOTATION</scope>
    <source>
        <strain evidence="11">Berkeley</strain>
    </source>
</reference>
<reference evidence="8" key="3">
    <citation type="journal article" date="2002" name="Genome Biol.">
        <title>A Drosophila full-length cDNA resource.</title>
        <authorList>
            <person name="Stapleton M."/>
            <person name="Carlson J.W."/>
            <person name="Brokstein P."/>
            <person name="Yu C."/>
            <person name="Champe M."/>
            <person name="George R.A."/>
            <person name="Guarin H."/>
            <person name="Kronmiller B."/>
            <person name="Pacleb J.M."/>
            <person name="Park S."/>
            <person name="Wan K.H."/>
            <person name="Rubin G.M."/>
            <person name="Celniker S.E."/>
        </authorList>
    </citation>
    <scope>NUCLEOTIDE SEQUENCE [LARGE SCALE MRNA]</scope>
    <source>
        <strain evidence="8">Berkeley</strain>
        <tissue evidence="8">Embryo</tissue>
    </source>
</reference>
<reference evidence="9" key="4">
    <citation type="submission" date="2008-09" db="EMBL/GenBank/DDBJ databases">
        <authorList>
            <person name="Carlson J."/>
            <person name="Booth B."/>
            <person name="Frise E."/>
            <person name="Park S."/>
            <person name="Wan K."/>
            <person name="Yu C."/>
            <person name="Celniker S."/>
        </authorList>
    </citation>
    <scope>NUCLEOTIDE SEQUENCE [LARGE SCALE MRNA]</scope>
    <source>
        <strain evidence="9">Berkeley</strain>
    </source>
</reference>
<reference evidence="7" key="5">
    <citation type="journal article" date="2011" name="Development">
        <title>no child left behind encodes a novel chromatin factor required for germline stem cell maintenance in males but not females.</title>
        <authorList>
            <person name="Casper A.L."/>
            <person name="Baxter K."/>
            <person name="Van Doren M."/>
        </authorList>
    </citation>
    <scope>FUNCTION</scope>
    <scope>DEVELOPMENTAL STAGE</scope>
    <scope>DISRUPTION PHENOTYPE</scope>
</reference>
<reference evidence="7" key="6">
    <citation type="journal article" date="2017" name="Dev. Cell">
        <title>PWP1 Mediates Nutrient-Dependent Growth Control through Nucleolar Regulation of Ribosomal Gene Expression.</title>
        <authorList>
            <person name="Liu Y."/>
            <person name="Mattila J."/>
            <person name="Ventelae S."/>
            <person name="Yadav L."/>
            <person name="Zhang W."/>
            <person name="Lamichane N."/>
            <person name="Sundstroem J."/>
            <person name="Kauko O."/>
            <person name="Grenman R."/>
            <person name="Varjosalo M."/>
            <person name="Westermarck J."/>
            <person name="Hietakangas V."/>
        </authorList>
    </citation>
    <scope>FUNCTION</scope>
    <scope>INTERACTION WITH MYBBP1A</scope>
    <scope>SUBCELLULAR LOCATION</scope>
    <scope>DEVELOPMENTAL STAGE</scope>
    <scope>PHOSPHORYLATION AT SER-385</scope>
    <scope>DISRUPTION PHENOTYPE</scope>
    <scope>MUTAGENESIS OF SER-252 AND SER-385</scope>
</reference>
<feature type="chain" id="PRO_0000445033" description="Periodic tryptophan protein 1 homolog" evidence="7">
    <location>
        <begin position="1"/>
        <end position="459"/>
    </location>
</feature>
<feature type="repeat" description="WD 1" evidence="1">
    <location>
        <begin position="168"/>
        <end position="214"/>
    </location>
</feature>
<feature type="repeat" description="WD 2" evidence="1">
    <location>
        <begin position="232"/>
        <end position="272"/>
    </location>
</feature>
<feature type="repeat" description="WD 3" evidence="1">
    <location>
        <begin position="275"/>
        <end position="315"/>
    </location>
</feature>
<feature type="repeat" description="WD 4" evidence="1">
    <location>
        <begin position="321"/>
        <end position="361"/>
    </location>
</feature>
<feature type="repeat" description="WD 5" evidence="1">
    <location>
        <begin position="365"/>
        <end position="405"/>
    </location>
</feature>
<feature type="region of interest" description="Disordered" evidence="2">
    <location>
        <begin position="44"/>
        <end position="84"/>
    </location>
</feature>
<feature type="compositionally biased region" description="Acidic residues" evidence="2">
    <location>
        <begin position="48"/>
        <end position="73"/>
    </location>
</feature>
<feature type="compositionally biased region" description="Basic and acidic residues" evidence="2">
    <location>
        <begin position="74"/>
        <end position="84"/>
    </location>
</feature>
<feature type="modified residue" description="Phosphoserine" evidence="4">
    <location>
        <position position="385"/>
    </location>
</feature>
<feature type="mutagenesis site" description="Reduces expression levels; does not affect phosphorylation." evidence="4">
    <original>S</original>
    <variation>A</variation>
    <location>
        <position position="252"/>
    </location>
</feature>
<feature type="mutagenesis site" description="Abolishes phosphorylation by TORC1 signaling. Results in loss of nucleolar localization." evidence="4">
    <original>S</original>
    <variation>A</variation>
    <location>
        <position position="385"/>
    </location>
</feature>
<feature type="mutagenesis site" description="Impairs nucleolar localization." evidence="4">
    <original>S</original>
    <variation>E</variation>
    <location>
        <position position="385"/>
    </location>
</feature>
<feature type="sequence conflict" description="In Ref. 3; AAL68278." evidence="7" ref="3">
    <original>W</original>
    <variation>S</variation>
    <location>
        <position position="152"/>
    </location>
</feature>
<dbReference type="EMBL" id="AE013599">
    <property type="protein sequence ID" value="AAF58738.1"/>
    <property type="molecule type" value="Genomic_DNA"/>
</dbReference>
<dbReference type="EMBL" id="AY075465">
    <property type="protein sequence ID" value="AAL68278.1"/>
    <property type="molecule type" value="mRNA"/>
</dbReference>
<dbReference type="EMBL" id="BT044570">
    <property type="protein sequence ID" value="ACI16532.1"/>
    <property type="status" value="ALT_INIT"/>
    <property type="molecule type" value="mRNA"/>
</dbReference>
<dbReference type="RefSeq" id="NP_610623.1">
    <property type="nucleotide sequence ID" value="NM_136779.4"/>
</dbReference>
<dbReference type="SMR" id="A1Z8D0"/>
<dbReference type="FunCoup" id="A1Z8D0">
    <property type="interactions" value="2358"/>
</dbReference>
<dbReference type="IntAct" id="A1Z8D0">
    <property type="interactions" value="1"/>
</dbReference>
<dbReference type="STRING" id="7227.FBpp0087323"/>
<dbReference type="iPTMnet" id="A1Z8D0"/>
<dbReference type="PaxDb" id="7227-FBpp0087323"/>
<dbReference type="DNASU" id="36150"/>
<dbReference type="EnsemblMetazoa" id="FBtr0088228">
    <property type="protein sequence ID" value="FBpp0087323"/>
    <property type="gene ID" value="FBgn0263510"/>
</dbReference>
<dbReference type="GeneID" id="36150"/>
<dbReference type="KEGG" id="dme:Dmel_CG6751"/>
<dbReference type="UCSC" id="CG6751-RA">
    <property type="organism name" value="d. melanogaster"/>
</dbReference>
<dbReference type="AGR" id="FB:FBgn0263510"/>
<dbReference type="CTD" id="36150"/>
<dbReference type="FlyBase" id="FBgn0263510">
    <property type="gene designation" value="nclb"/>
</dbReference>
<dbReference type="VEuPathDB" id="VectorBase:FBgn0263510"/>
<dbReference type="eggNOG" id="KOG0270">
    <property type="taxonomic scope" value="Eukaryota"/>
</dbReference>
<dbReference type="GeneTree" id="ENSGT00390000017324"/>
<dbReference type="HOGENOM" id="CLU_023867_1_1_1"/>
<dbReference type="InParanoid" id="A1Z8D0"/>
<dbReference type="OMA" id="CFVPRGV"/>
<dbReference type="OrthoDB" id="270624at2759"/>
<dbReference type="PhylomeDB" id="A1Z8D0"/>
<dbReference type="BioGRID-ORCS" id="36150">
    <property type="hits" value="0 hits in 1 CRISPR screen"/>
</dbReference>
<dbReference type="GenomeRNAi" id="36150"/>
<dbReference type="PRO" id="PR:A1Z8D0"/>
<dbReference type="Proteomes" id="UP000000803">
    <property type="component" value="Chromosome 2R"/>
</dbReference>
<dbReference type="Bgee" id="FBgn0263510">
    <property type="expression patterns" value="Expressed in adult enteroendocrine precursor cell in adult midgut (Drosophila) and 121 other cell types or tissues"/>
</dbReference>
<dbReference type="GO" id="GO:0005694">
    <property type="term" value="C:chromosome"/>
    <property type="evidence" value="ECO:0007669"/>
    <property type="project" value="UniProtKB-SubCell"/>
</dbReference>
<dbReference type="GO" id="GO:0005730">
    <property type="term" value="C:nucleolus"/>
    <property type="evidence" value="ECO:0000314"/>
    <property type="project" value="FlyBase"/>
</dbReference>
<dbReference type="GO" id="GO:0005654">
    <property type="term" value="C:nucleoplasm"/>
    <property type="evidence" value="ECO:0000314"/>
    <property type="project" value="FlyBase"/>
</dbReference>
<dbReference type="GO" id="GO:0005634">
    <property type="term" value="C:nucleus"/>
    <property type="evidence" value="ECO:0000314"/>
    <property type="project" value="FlyBase"/>
</dbReference>
<dbReference type="GO" id="GO:0031490">
    <property type="term" value="F:chromatin DNA binding"/>
    <property type="evidence" value="ECO:0000315"/>
    <property type="project" value="FlyBase"/>
</dbReference>
<dbReference type="GO" id="GO:0032869">
    <property type="term" value="P:cellular response to insulin stimulus"/>
    <property type="evidence" value="ECO:0000314"/>
    <property type="project" value="FlyBase"/>
</dbReference>
<dbReference type="GO" id="GO:0030707">
    <property type="term" value="P:follicle cell of egg chamber development"/>
    <property type="evidence" value="ECO:0000315"/>
    <property type="project" value="FlyBase"/>
</dbReference>
<dbReference type="GO" id="GO:0007281">
    <property type="term" value="P:germ cell development"/>
    <property type="evidence" value="ECO:0000315"/>
    <property type="project" value="FlyBase"/>
</dbReference>
<dbReference type="GO" id="GO:0036098">
    <property type="term" value="P:male germ-line stem cell population maintenance"/>
    <property type="evidence" value="ECO:0000315"/>
    <property type="project" value="FlyBase"/>
</dbReference>
<dbReference type="GO" id="GO:0008584">
    <property type="term" value="P:male gonad development"/>
    <property type="evidence" value="ECO:0000315"/>
    <property type="project" value="FlyBase"/>
</dbReference>
<dbReference type="GO" id="GO:0030723">
    <property type="term" value="P:ovarian fusome organization"/>
    <property type="evidence" value="ECO:0000315"/>
    <property type="project" value="FlyBase"/>
</dbReference>
<dbReference type="GO" id="GO:0090070">
    <property type="term" value="P:positive regulation of ribosome biogenesis"/>
    <property type="evidence" value="ECO:0000314"/>
    <property type="project" value="FlyBase"/>
</dbReference>
<dbReference type="GO" id="GO:0045945">
    <property type="term" value="P:positive regulation of transcription by RNA polymerase III"/>
    <property type="evidence" value="ECO:0000314"/>
    <property type="project" value="FlyBase"/>
</dbReference>
<dbReference type="GO" id="GO:1901838">
    <property type="term" value="P:positive regulation of transcription of nucleolar large rRNA by RNA polymerase I"/>
    <property type="evidence" value="ECO:0000314"/>
    <property type="project" value="FlyBase"/>
</dbReference>
<dbReference type="GO" id="GO:0010468">
    <property type="term" value="P:regulation of gene expression"/>
    <property type="evidence" value="ECO:0000315"/>
    <property type="project" value="FlyBase"/>
</dbReference>
<dbReference type="GO" id="GO:0006364">
    <property type="term" value="P:rRNA processing"/>
    <property type="evidence" value="ECO:0007669"/>
    <property type="project" value="InterPro"/>
</dbReference>
<dbReference type="FunFam" id="2.130.10.10:FF:002846">
    <property type="entry name" value="Periodic tryptophan protein 1 homolog"/>
    <property type="match status" value="1"/>
</dbReference>
<dbReference type="Gene3D" id="2.130.10.10">
    <property type="entry name" value="YVTN repeat-like/Quinoprotein amine dehydrogenase"/>
    <property type="match status" value="1"/>
</dbReference>
<dbReference type="InterPro" id="IPR044285">
    <property type="entry name" value="PWP1"/>
</dbReference>
<dbReference type="InterPro" id="IPR015943">
    <property type="entry name" value="WD40/YVTN_repeat-like_dom_sf"/>
</dbReference>
<dbReference type="InterPro" id="IPR019775">
    <property type="entry name" value="WD40_repeat_CS"/>
</dbReference>
<dbReference type="InterPro" id="IPR036322">
    <property type="entry name" value="WD40_repeat_dom_sf"/>
</dbReference>
<dbReference type="InterPro" id="IPR001680">
    <property type="entry name" value="WD40_rpt"/>
</dbReference>
<dbReference type="PANTHER" id="PTHR14091">
    <property type="entry name" value="PERIODIC TRYPTOPHAN PROTEIN 1"/>
    <property type="match status" value="1"/>
</dbReference>
<dbReference type="PANTHER" id="PTHR14091:SF0">
    <property type="entry name" value="PERIODIC TRYPTOPHAN PROTEIN 1 HOMOLOG"/>
    <property type="match status" value="1"/>
</dbReference>
<dbReference type="Pfam" id="PF00400">
    <property type="entry name" value="WD40"/>
    <property type="match status" value="3"/>
</dbReference>
<dbReference type="SMART" id="SM00320">
    <property type="entry name" value="WD40"/>
    <property type="match status" value="5"/>
</dbReference>
<dbReference type="SUPFAM" id="SSF50978">
    <property type="entry name" value="WD40 repeat-like"/>
    <property type="match status" value="1"/>
</dbReference>
<dbReference type="PROSITE" id="PS00678">
    <property type="entry name" value="WD_REPEATS_1"/>
    <property type="match status" value="2"/>
</dbReference>
<dbReference type="PROSITE" id="PS50082">
    <property type="entry name" value="WD_REPEATS_2"/>
    <property type="match status" value="2"/>
</dbReference>
<dbReference type="PROSITE" id="PS50294">
    <property type="entry name" value="WD_REPEATS_REGION"/>
    <property type="match status" value="1"/>
</dbReference>
<name>PWP1_DROME</name>
<evidence type="ECO:0000255" key="1"/>
<evidence type="ECO:0000256" key="2">
    <source>
        <dbReference type="SAM" id="MobiDB-lite"/>
    </source>
</evidence>
<evidence type="ECO:0000269" key="3">
    <source>
    </source>
</evidence>
<evidence type="ECO:0000269" key="4">
    <source>
    </source>
</evidence>
<evidence type="ECO:0000303" key="5">
    <source>
    </source>
</evidence>
<evidence type="ECO:0000303" key="6">
    <source>
    </source>
</evidence>
<evidence type="ECO:0000305" key="7"/>
<evidence type="ECO:0000312" key="8">
    <source>
        <dbReference type="EMBL" id="AAL68278.1"/>
    </source>
</evidence>
<evidence type="ECO:0000312" key="9">
    <source>
        <dbReference type="EMBL" id="ACI16532.1"/>
    </source>
</evidence>
<evidence type="ECO:0000312" key="10">
    <source>
        <dbReference type="FlyBase" id="FBgn0263510"/>
    </source>
</evidence>
<evidence type="ECO:0000312" key="11">
    <source>
        <dbReference type="Proteomes" id="UP000000803"/>
    </source>
</evidence>
<gene>
    <name evidence="5 10" type="primary">nclb</name>
    <name evidence="6" type="synonym">dpwp1</name>
    <name evidence="10" type="ORF">CG6751</name>
</gene>
<proteinExistence type="evidence at protein level"/>
<keyword id="KW-0158">Chromosome</keyword>
<keyword id="KW-0539">Nucleus</keyword>
<keyword id="KW-0597">Phosphoprotein</keyword>
<keyword id="KW-1185">Reference proteome</keyword>
<keyword id="KW-0677">Repeat</keyword>
<keyword id="KW-0690">Ribosome biogenesis</keyword>
<keyword id="KW-0804">Transcription</keyword>
<keyword id="KW-0805">Transcription regulation</keyword>
<keyword id="KW-0853">WD repeat</keyword>
<protein>
    <recommendedName>
        <fullName evidence="6">Periodic tryptophan protein 1 homolog</fullName>
        <shortName evidence="6">PWP1</shortName>
    </recommendedName>
    <alternativeName>
        <fullName evidence="5 10">Protein no child left behind</fullName>
    </alternativeName>
</protein>